<accession>Q3SIE5</accession>
<name>FLGI_THIDA</name>
<evidence type="ECO:0000255" key="1">
    <source>
        <dbReference type="HAMAP-Rule" id="MF_00416"/>
    </source>
</evidence>
<comment type="function">
    <text evidence="1">Assembles around the rod to form the L-ring and probably protects the motor/basal body from shearing forces during rotation.</text>
</comment>
<comment type="subunit">
    <text evidence="1">The basal body constitutes a major portion of the flagellar organelle and consists of four rings (L,P,S, and M) mounted on a central rod.</text>
</comment>
<comment type="subcellular location">
    <subcellularLocation>
        <location evidence="1">Periplasm</location>
    </subcellularLocation>
    <subcellularLocation>
        <location evidence="1">Bacterial flagellum basal body</location>
    </subcellularLocation>
</comment>
<comment type="similarity">
    <text evidence="1">Belongs to the FlgI family.</text>
</comment>
<protein>
    <recommendedName>
        <fullName evidence="1">Flagellar P-ring protein</fullName>
    </recommendedName>
    <alternativeName>
        <fullName evidence="1">Basal body P-ring protein</fullName>
    </alternativeName>
</protein>
<gene>
    <name evidence="1" type="primary">flgI</name>
    <name type="ordered locus">Tbd_1630</name>
</gene>
<dbReference type="EMBL" id="CP000116">
    <property type="protein sequence ID" value="AAZ97583.1"/>
    <property type="molecule type" value="Genomic_DNA"/>
</dbReference>
<dbReference type="RefSeq" id="WP_011312142.1">
    <property type="nucleotide sequence ID" value="NC_007404.1"/>
</dbReference>
<dbReference type="SMR" id="Q3SIE5"/>
<dbReference type="STRING" id="292415.Tbd_1630"/>
<dbReference type="KEGG" id="tbd:Tbd_1630"/>
<dbReference type="eggNOG" id="COG1706">
    <property type="taxonomic scope" value="Bacteria"/>
</dbReference>
<dbReference type="HOGENOM" id="CLU_045235_1_0_4"/>
<dbReference type="OrthoDB" id="9786431at2"/>
<dbReference type="Proteomes" id="UP000008291">
    <property type="component" value="Chromosome"/>
</dbReference>
<dbReference type="GO" id="GO:0009428">
    <property type="term" value="C:bacterial-type flagellum basal body, distal rod, P ring"/>
    <property type="evidence" value="ECO:0007669"/>
    <property type="project" value="InterPro"/>
</dbReference>
<dbReference type="GO" id="GO:0030288">
    <property type="term" value="C:outer membrane-bounded periplasmic space"/>
    <property type="evidence" value="ECO:0007669"/>
    <property type="project" value="InterPro"/>
</dbReference>
<dbReference type="GO" id="GO:0005198">
    <property type="term" value="F:structural molecule activity"/>
    <property type="evidence" value="ECO:0007669"/>
    <property type="project" value="InterPro"/>
</dbReference>
<dbReference type="GO" id="GO:0071973">
    <property type="term" value="P:bacterial-type flagellum-dependent cell motility"/>
    <property type="evidence" value="ECO:0007669"/>
    <property type="project" value="InterPro"/>
</dbReference>
<dbReference type="HAMAP" id="MF_00416">
    <property type="entry name" value="FlgI"/>
    <property type="match status" value="1"/>
</dbReference>
<dbReference type="InterPro" id="IPR001782">
    <property type="entry name" value="Flag_FlgI"/>
</dbReference>
<dbReference type="NCBIfam" id="NF003676">
    <property type="entry name" value="PRK05303.1"/>
    <property type="match status" value="1"/>
</dbReference>
<dbReference type="PANTHER" id="PTHR30381">
    <property type="entry name" value="FLAGELLAR P-RING PERIPLASMIC PROTEIN FLGI"/>
    <property type="match status" value="1"/>
</dbReference>
<dbReference type="PANTHER" id="PTHR30381:SF0">
    <property type="entry name" value="FLAGELLAR P-RING PROTEIN"/>
    <property type="match status" value="1"/>
</dbReference>
<dbReference type="Pfam" id="PF02119">
    <property type="entry name" value="FlgI"/>
    <property type="match status" value="1"/>
</dbReference>
<dbReference type="PRINTS" id="PR01010">
    <property type="entry name" value="FLGPRINGFLGI"/>
</dbReference>
<organism>
    <name type="scientific">Thiobacillus denitrificans (strain ATCC 25259 / T1)</name>
    <dbReference type="NCBI Taxonomy" id="292415"/>
    <lineage>
        <taxon>Bacteria</taxon>
        <taxon>Pseudomonadati</taxon>
        <taxon>Pseudomonadota</taxon>
        <taxon>Betaproteobacteria</taxon>
        <taxon>Nitrosomonadales</taxon>
        <taxon>Thiobacillaceae</taxon>
        <taxon>Thiobacillus</taxon>
    </lineage>
</organism>
<proteinExistence type="inferred from homology"/>
<keyword id="KW-0975">Bacterial flagellum</keyword>
<keyword id="KW-0574">Periplasm</keyword>
<keyword id="KW-1185">Reference proteome</keyword>
<keyword id="KW-0732">Signal</keyword>
<sequence>MKLPHFFVLAALVLSGAAHAERIKDIAAIQGVRANQLFGYGLVVGLDGTGDQTTQTPFTTQSIANMLTQMGVNLPPGINMQLKNVAAVMVTADLPPFAQAGQAIDVTVSSIGNAKSLRGGTLVMAPLKGADGLVYAMAQGSLVVSGAGASANGSKVQVNHLSVGRIPAGATVERTVATALGESGSINLELRQSDFTTASRVVDVVNARFGADTARALNARVVAVKTPLGASERVAFLGAIEGLEVSPGQAMAKVIINARTGSVVMNQTVTLDPSAVSHGNLSVVISTAPVISQPAPFGRGETVVAAESQIEIRQQPGEVMMLKGGASLADVVKALNSIGATPQDLLAILQALKASGALRAELEVI</sequence>
<reference key="1">
    <citation type="journal article" date="2006" name="J. Bacteriol.">
        <title>The genome sequence of the obligately chemolithoautotrophic, facultatively anaerobic bacterium Thiobacillus denitrificans.</title>
        <authorList>
            <person name="Beller H.R."/>
            <person name="Chain P.S."/>
            <person name="Letain T.E."/>
            <person name="Chakicherla A."/>
            <person name="Larimer F.W."/>
            <person name="Richardson P.M."/>
            <person name="Coleman M.A."/>
            <person name="Wood A.P."/>
            <person name="Kelly D.P."/>
        </authorList>
    </citation>
    <scope>NUCLEOTIDE SEQUENCE [LARGE SCALE GENOMIC DNA]</scope>
    <source>
        <strain>ATCC 25259 / T1</strain>
    </source>
</reference>
<feature type="signal peptide" evidence="1">
    <location>
        <begin position="1"/>
        <end position="20"/>
    </location>
</feature>
<feature type="chain" id="PRO_0000236323" description="Flagellar P-ring protein">
    <location>
        <begin position="21"/>
        <end position="365"/>
    </location>
</feature>